<name>SUFE_YERPG</name>
<evidence type="ECO:0000255" key="1">
    <source>
        <dbReference type="HAMAP-Rule" id="MF_01832"/>
    </source>
</evidence>
<protein>
    <recommendedName>
        <fullName evidence="1">Cysteine desulfuration protein SufE</fullName>
    </recommendedName>
</protein>
<feature type="chain" id="PRO_1000188340" description="Cysteine desulfuration protein SufE">
    <location>
        <begin position="1"/>
        <end position="140"/>
    </location>
</feature>
<feature type="active site" description="Cysteine persulfide intermediate" evidence="1">
    <location>
        <position position="51"/>
    </location>
</feature>
<sequence>MAGLPDRDKLIRNFSRCLNWEEKYLYIIELGGQLAPLTEQQRHPENLISGCQSQVWIAMTLSAEGHVIFAGDSDAAIVKGLVAVVFILYHDLTPQQIISLDVRPFFADLALSQHLTPSRSQGLEAMIRAIRTKVANLSAH</sequence>
<comment type="function">
    <text evidence="1">Participates in cysteine desulfuration mediated by SufS. Cysteine desulfuration mobilizes sulfur from L-cysteine to yield L-alanine and constitutes an essential step in sulfur metabolism for biosynthesis of a variety of sulfur-containing biomolecules. Functions as a sulfur acceptor for SufS, by mediating the direct transfer of the sulfur atom from the S-sulfanylcysteine of SufS, an intermediate product of cysteine desulfuration process.</text>
</comment>
<comment type="pathway">
    <text evidence="1">Cofactor biosynthesis; iron-sulfur cluster biosynthesis.</text>
</comment>
<comment type="subunit">
    <text evidence="1">Homodimer. Interacts with SufS.</text>
</comment>
<comment type="subcellular location">
    <subcellularLocation>
        <location evidence="1">Cytoplasm</location>
    </subcellularLocation>
</comment>
<comment type="similarity">
    <text evidence="1">Belongs to the SufE family.</text>
</comment>
<proteinExistence type="inferred from homology"/>
<dbReference type="EMBL" id="CP000901">
    <property type="protein sequence ID" value="ABX86776.1"/>
    <property type="molecule type" value="Genomic_DNA"/>
</dbReference>
<dbReference type="RefSeq" id="WP_002211804.1">
    <property type="nucleotide sequence ID" value="NZ_CP009935.1"/>
</dbReference>
<dbReference type="SMR" id="A9QZC8"/>
<dbReference type="GeneID" id="57976275"/>
<dbReference type="KEGG" id="ypg:YpAngola_A2589"/>
<dbReference type="PATRIC" id="fig|349746.12.peg.3613"/>
<dbReference type="UniPathway" id="UPA00266"/>
<dbReference type="GO" id="GO:0005737">
    <property type="term" value="C:cytoplasm"/>
    <property type="evidence" value="ECO:0007669"/>
    <property type="project" value="UniProtKB-SubCell"/>
</dbReference>
<dbReference type="GO" id="GO:0016226">
    <property type="term" value="P:iron-sulfur cluster assembly"/>
    <property type="evidence" value="ECO:0007669"/>
    <property type="project" value="InterPro"/>
</dbReference>
<dbReference type="GO" id="GO:0006790">
    <property type="term" value="P:sulfur compound metabolic process"/>
    <property type="evidence" value="ECO:0007669"/>
    <property type="project" value="InterPro"/>
</dbReference>
<dbReference type="Gene3D" id="3.90.1010.10">
    <property type="match status" value="1"/>
</dbReference>
<dbReference type="HAMAP" id="MF_01832">
    <property type="entry name" value="SufE"/>
    <property type="match status" value="1"/>
</dbReference>
<dbReference type="InterPro" id="IPR023939">
    <property type="entry name" value="Cysteine_desulfuration_SufE"/>
</dbReference>
<dbReference type="InterPro" id="IPR003808">
    <property type="entry name" value="Fe-S_metab-assoc_dom"/>
</dbReference>
<dbReference type="NCBIfam" id="NF006792">
    <property type="entry name" value="PRK09296.1"/>
    <property type="match status" value="1"/>
</dbReference>
<dbReference type="PANTHER" id="PTHR43597:SF3">
    <property type="entry name" value="CYSTEINE DESULFURATION PROTEIN SUFE"/>
    <property type="match status" value="1"/>
</dbReference>
<dbReference type="PANTHER" id="PTHR43597">
    <property type="entry name" value="SULFUR ACCEPTOR PROTEIN CSDE"/>
    <property type="match status" value="1"/>
</dbReference>
<dbReference type="Pfam" id="PF02657">
    <property type="entry name" value="SufE"/>
    <property type="match status" value="1"/>
</dbReference>
<dbReference type="SUPFAM" id="SSF82649">
    <property type="entry name" value="SufE/NifU"/>
    <property type="match status" value="1"/>
</dbReference>
<keyword id="KW-0963">Cytoplasm</keyword>
<reference key="1">
    <citation type="journal article" date="2010" name="J. Bacteriol.">
        <title>Genome sequence of the deep-rooted Yersinia pestis strain Angola reveals new insights into the evolution and pangenome of the plague bacterium.</title>
        <authorList>
            <person name="Eppinger M."/>
            <person name="Worsham P.L."/>
            <person name="Nikolich M.P."/>
            <person name="Riley D.R."/>
            <person name="Sebastian Y."/>
            <person name="Mou S."/>
            <person name="Achtman M."/>
            <person name="Lindler L.E."/>
            <person name="Ravel J."/>
        </authorList>
    </citation>
    <scope>NUCLEOTIDE SEQUENCE [LARGE SCALE GENOMIC DNA]</scope>
    <source>
        <strain>Angola</strain>
    </source>
</reference>
<accession>A9QZC8</accession>
<organism>
    <name type="scientific">Yersinia pestis bv. Antiqua (strain Angola)</name>
    <dbReference type="NCBI Taxonomy" id="349746"/>
    <lineage>
        <taxon>Bacteria</taxon>
        <taxon>Pseudomonadati</taxon>
        <taxon>Pseudomonadota</taxon>
        <taxon>Gammaproteobacteria</taxon>
        <taxon>Enterobacterales</taxon>
        <taxon>Yersiniaceae</taxon>
        <taxon>Yersinia</taxon>
    </lineage>
</organism>
<gene>
    <name evidence="1" type="primary">sufE</name>
    <name type="ordered locus">YpAngola_A2589</name>
</gene>